<proteinExistence type="inferred from homology"/>
<feature type="chain" id="PRO_0000212166" description="2,3-bisphosphoglycerate-independent phosphoglycerate mutase">
    <location>
        <begin position="1"/>
        <end position="503"/>
    </location>
</feature>
<feature type="active site" description="Phosphoserine intermediate" evidence="1">
    <location>
        <position position="60"/>
    </location>
</feature>
<feature type="binding site" evidence="1">
    <location>
        <position position="10"/>
    </location>
    <ligand>
        <name>Mn(2+)</name>
        <dbReference type="ChEBI" id="CHEBI:29035"/>
        <label>2</label>
    </ligand>
</feature>
<feature type="binding site" evidence="1">
    <location>
        <position position="60"/>
    </location>
    <ligand>
        <name>Mn(2+)</name>
        <dbReference type="ChEBI" id="CHEBI:29035"/>
        <label>2</label>
    </ligand>
</feature>
<feature type="binding site" evidence="1">
    <location>
        <position position="121"/>
    </location>
    <ligand>
        <name>substrate</name>
    </ligand>
</feature>
<feature type="binding site" evidence="1">
    <location>
        <begin position="150"/>
        <end position="151"/>
    </location>
    <ligand>
        <name>substrate</name>
    </ligand>
</feature>
<feature type="binding site" evidence="1">
    <location>
        <position position="181"/>
    </location>
    <ligand>
        <name>substrate</name>
    </ligand>
</feature>
<feature type="binding site" evidence="1">
    <location>
        <position position="187"/>
    </location>
    <ligand>
        <name>substrate</name>
    </ligand>
</feature>
<feature type="binding site" evidence="1">
    <location>
        <begin position="256"/>
        <end position="259"/>
    </location>
    <ligand>
        <name>substrate</name>
    </ligand>
</feature>
<feature type="binding site" evidence="1">
    <location>
        <position position="330"/>
    </location>
    <ligand>
        <name>substrate</name>
    </ligand>
</feature>
<feature type="binding site" evidence="1">
    <location>
        <position position="396"/>
    </location>
    <ligand>
        <name>Mn(2+)</name>
        <dbReference type="ChEBI" id="CHEBI:29035"/>
        <label>1</label>
    </ligand>
</feature>
<feature type="binding site" evidence="1">
    <location>
        <position position="400"/>
    </location>
    <ligand>
        <name>Mn(2+)</name>
        <dbReference type="ChEBI" id="CHEBI:29035"/>
        <label>1</label>
    </ligand>
</feature>
<feature type="binding site" evidence="1">
    <location>
        <position position="437"/>
    </location>
    <ligand>
        <name>Mn(2+)</name>
        <dbReference type="ChEBI" id="CHEBI:29035"/>
        <label>2</label>
    </ligand>
</feature>
<feature type="binding site" evidence="1">
    <location>
        <position position="438"/>
    </location>
    <ligand>
        <name>Mn(2+)</name>
        <dbReference type="ChEBI" id="CHEBI:29035"/>
        <label>2</label>
    </ligand>
</feature>
<feature type="binding site" evidence="1">
    <location>
        <position position="455"/>
    </location>
    <ligand>
        <name>Mn(2+)</name>
        <dbReference type="ChEBI" id="CHEBI:29035"/>
        <label>1</label>
    </ligand>
</feature>
<sequence length="503" mass="56579">MKKALLMILDGYGISSTTHGNAVKNAKTPHLDNLMNNNPTIMLQASGEAVGLPKNQIGNSEVGHLNIGAGRIIYTGLSLINKEIENKKFFTNQALLNAIDHAKKNNSKLHILGLVSNGGVHSHINHIYAIMELANQHNVPAILHIFGDGRDVPPTQLLADLDQLIKKAETTKTKIGTISGRFYAMDRDQRWDRIDLAYNNLLSNTGKSFADLKTYVKDSYQQNITDEFIVPAYNNNYKSDEITIQDNDSVVFANFRPDRARQLSHYVFGSNYYDHHPQLRRKNLYFVIMMQYEGINPSAICYPPKIEKNTLGEVLKNANKKQLRIAETEKYAHVTFFFDGGVEVEYQNEDKVLVPSRKDVKTYDLAPEMSAAAIVDQLLKVYTKYDLTVLNFANPDMVGHTGNYEATLKGLEALDHEIGRLLADAKKNNITVFFTADHGNAEEMIDENNQKVTKHTTNVVPFSITDPNVKFTKKEGILANVAPTILKYLEIQIPEEMDQEPLI</sequence>
<name>GPMI_MYCGA</name>
<reference key="1">
    <citation type="journal article" date="2003" name="Microbiology">
        <title>The complete genome sequence of the avian pathogen Mycoplasma gallisepticum strain R(low).</title>
        <authorList>
            <person name="Papazisi L."/>
            <person name="Gorton T.S."/>
            <person name="Kutish G."/>
            <person name="Markham P.F."/>
            <person name="Browning G.F."/>
            <person name="Nguyen D.K."/>
            <person name="Swartzell S."/>
            <person name="Madan A."/>
            <person name="Mahairas G."/>
            <person name="Geary S.J."/>
        </authorList>
    </citation>
    <scope>NUCLEOTIDE SEQUENCE [LARGE SCALE GENOMIC DNA]</scope>
    <source>
        <strain>R(low / passage 15 / clone 2)</strain>
    </source>
</reference>
<keyword id="KW-0324">Glycolysis</keyword>
<keyword id="KW-0413">Isomerase</keyword>
<keyword id="KW-0464">Manganese</keyword>
<keyword id="KW-0479">Metal-binding</keyword>
<keyword id="KW-1185">Reference proteome</keyword>
<protein>
    <recommendedName>
        <fullName evidence="1">2,3-bisphosphoglycerate-independent phosphoglycerate mutase</fullName>
        <shortName evidence="1">BPG-independent PGAM</shortName>
        <shortName evidence="1">Phosphoglyceromutase</shortName>
        <shortName evidence="1">iPGM</shortName>
        <ecNumber evidence="1">5.4.2.12</ecNumber>
    </recommendedName>
</protein>
<gene>
    <name evidence="1" type="primary">gpmI</name>
    <name type="ordered locus">MYCGA5800</name>
    <name type="ORF">MGA_0356</name>
</gene>
<dbReference type="EC" id="5.4.2.12" evidence="1"/>
<dbReference type="EMBL" id="AE015450">
    <property type="protein sequence ID" value="AAP56930.1"/>
    <property type="molecule type" value="Genomic_DNA"/>
</dbReference>
<dbReference type="RefSeq" id="WP_011113837.1">
    <property type="nucleotide sequence ID" value="NC_004829.2"/>
</dbReference>
<dbReference type="SMR" id="Q7NAQ5"/>
<dbReference type="KEGG" id="mga:MGA_0356"/>
<dbReference type="HOGENOM" id="CLU_026099_2_0_14"/>
<dbReference type="OrthoDB" id="9800863at2"/>
<dbReference type="UniPathway" id="UPA00109">
    <property type="reaction ID" value="UER00186"/>
</dbReference>
<dbReference type="Proteomes" id="UP000001418">
    <property type="component" value="Chromosome"/>
</dbReference>
<dbReference type="GO" id="GO:0005829">
    <property type="term" value="C:cytosol"/>
    <property type="evidence" value="ECO:0007669"/>
    <property type="project" value="TreeGrafter"/>
</dbReference>
<dbReference type="GO" id="GO:0030145">
    <property type="term" value="F:manganese ion binding"/>
    <property type="evidence" value="ECO:0007669"/>
    <property type="project" value="UniProtKB-UniRule"/>
</dbReference>
<dbReference type="GO" id="GO:0004619">
    <property type="term" value="F:phosphoglycerate mutase activity"/>
    <property type="evidence" value="ECO:0007669"/>
    <property type="project" value="UniProtKB-EC"/>
</dbReference>
<dbReference type="GO" id="GO:0006007">
    <property type="term" value="P:glucose catabolic process"/>
    <property type="evidence" value="ECO:0007669"/>
    <property type="project" value="InterPro"/>
</dbReference>
<dbReference type="GO" id="GO:0006096">
    <property type="term" value="P:glycolytic process"/>
    <property type="evidence" value="ECO:0007669"/>
    <property type="project" value="UniProtKB-UniRule"/>
</dbReference>
<dbReference type="CDD" id="cd16010">
    <property type="entry name" value="iPGM"/>
    <property type="match status" value="1"/>
</dbReference>
<dbReference type="FunFam" id="3.40.1450.10:FF:000002">
    <property type="entry name" value="2,3-bisphosphoglycerate-independent phosphoglycerate mutase"/>
    <property type="match status" value="1"/>
</dbReference>
<dbReference type="Gene3D" id="3.40.720.10">
    <property type="entry name" value="Alkaline Phosphatase, subunit A"/>
    <property type="match status" value="1"/>
</dbReference>
<dbReference type="Gene3D" id="3.40.1450.10">
    <property type="entry name" value="BPG-independent phosphoglycerate mutase, domain B"/>
    <property type="match status" value="1"/>
</dbReference>
<dbReference type="HAMAP" id="MF_01038">
    <property type="entry name" value="GpmI"/>
    <property type="match status" value="1"/>
</dbReference>
<dbReference type="InterPro" id="IPR017850">
    <property type="entry name" value="Alkaline_phosphatase_core_sf"/>
</dbReference>
<dbReference type="InterPro" id="IPR011258">
    <property type="entry name" value="BPG-indep_PGM_N"/>
</dbReference>
<dbReference type="InterPro" id="IPR006124">
    <property type="entry name" value="Metalloenzyme"/>
</dbReference>
<dbReference type="InterPro" id="IPR036646">
    <property type="entry name" value="PGAM_B_sf"/>
</dbReference>
<dbReference type="InterPro" id="IPR005995">
    <property type="entry name" value="Pgm_bpd_ind"/>
</dbReference>
<dbReference type="NCBIfam" id="TIGR01307">
    <property type="entry name" value="pgm_bpd_ind"/>
    <property type="match status" value="1"/>
</dbReference>
<dbReference type="PANTHER" id="PTHR31637">
    <property type="entry name" value="2,3-BISPHOSPHOGLYCERATE-INDEPENDENT PHOSPHOGLYCERATE MUTASE"/>
    <property type="match status" value="1"/>
</dbReference>
<dbReference type="PANTHER" id="PTHR31637:SF0">
    <property type="entry name" value="2,3-BISPHOSPHOGLYCERATE-INDEPENDENT PHOSPHOGLYCERATE MUTASE"/>
    <property type="match status" value="1"/>
</dbReference>
<dbReference type="Pfam" id="PF06415">
    <property type="entry name" value="iPGM_N"/>
    <property type="match status" value="1"/>
</dbReference>
<dbReference type="Pfam" id="PF01676">
    <property type="entry name" value="Metalloenzyme"/>
    <property type="match status" value="1"/>
</dbReference>
<dbReference type="PIRSF" id="PIRSF001492">
    <property type="entry name" value="IPGAM"/>
    <property type="match status" value="1"/>
</dbReference>
<dbReference type="SUPFAM" id="SSF64158">
    <property type="entry name" value="2,3-Bisphosphoglycerate-independent phosphoglycerate mutase, substrate-binding domain"/>
    <property type="match status" value="1"/>
</dbReference>
<dbReference type="SUPFAM" id="SSF53649">
    <property type="entry name" value="Alkaline phosphatase-like"/>
    <property type="match status" value="1"/>
</dbReference>
<accession>Q7NAQ5</accession>
<organism>
    <name type="scientific">Mycoplasmoides gallisepticum (strain R(low / passage 15 / clone 2))</name>
    <name type="common">Mycoplasma gallisepticum</name>
    <dbReference type="NCBI Taxonomy" id="710127"/>
    <lineage>
        <taxon>Bacteria</taxon>
        <taxon>Bacillati</taxon>
        <taxon>Mycoplasmatota</taxon>
        <taxon>Mycoplasmoidales</taxon>
        <taxon>Mycoplasmoidaceae</taxon>
        <taxon>Mycoplasmoides</taxon>
    </lineage>
</organism>
<comment type="function">
    <text evidence="1">Catalyzes the interconversion of 2-phosphoglycerate and 3-phosphoglycerate.</text>
</comment>
<comment type="catalytic activity">
    <reaction evidence="1">
        <text>(2R)-2-phosphoglycerate = (2R)-3-phosphoglycerate</text>
        <dbReference type="Rhea" id="RHEA:15901"/>
        <dbReference type="ChEBI" id="CHEBI:58272"/>
        <dbReference type="ChEBI" id="CHEBI:58289"/>
        <dbReference type="EC" id="5.4.2.12"/>
    </reaction>
</comment>
<comment type="cofactor">
    <cofactor evidence="1">
        <name>Mn(2+)</name>
        <dbReference type="ChEBI" id="CHEBI:29035"/>
    </cofactor>
    <text evidence="1">Binds 2 manganese ions per subunit.</text>
</comment>
<comment type="pathway">
    <text evidence="1">Carbohydrate degradation; glycolysis; pyruvate from D-glyceraldehyde 3-phosphate: step 3/5.</text>
</comment>
<comment type="subunit">
    <text evidence="1">Monomer.</text>
</comment>
<comment type="similarity">
    <text evidence="1">Belongs to the BPG-independent phosphoglycerate mutase family.</text>
</comment>
<evidence type="ECO:0000255" key="1">
    <source>
        <dbReference type="HAMAP-Rule" id="MF_01038"/>
    </source>
</evidence>